<reference key="1">
    <citation type="journal article" date="2008" name="J. Bacteriol.">
        <title>The complete genome sequence of Actinobacillus pleuropneumoniae L20 (serotype 5b).</title>
        <authorList>
            <person name="Foote S.J."/>
            <person name="Bosse J.T."/>
            <person name="Bouevitch A.B."/>
            <person name="Langford P.R."/>
            <person name="Young N.M."/>
            <person name="Nash J.H.E."/>
        </authorList>
    </citation>
    <scope>NUCLEOTIDE SEQUENCE [LARGE SCALE GENOMIC DNA]</scope>
    <source>
        <strain>L20</strain>
    </source>
</reference>
<organism>
    <name type="scientific">Actinobacillus pleuropneumoniae serotype 5b (strain L20)</name>
    <dbReference type="NCBI Taxonomy" id="416269"/>
    <lineage>
        <taxon>Bacteria</taxon>
        <taxon>Pseudomonadati</taxon>
        <taxon>Pseudomonadota</taxon>
        <taxon>Gammaproteobacteria</taxon>
        <taxon>Pasteurellales</taxon>
        <taxon>Pasteurellaceae</taxon>
        <taxon>Actinobacillus</taxon>
    </lineage>
</organism>
<comment type="subunit">
    <text evidence="1">Part of the 50S ribosomal subunit.</text>
</comment>
<comment type="similarity">
    <text evidence="1">Belongs to the bacterial ribosomal protein bL31 family. Type B subfamily.</text>
</comment>
<accession>A3N3B7</accession>
<keyword id="KW-1185">Reference proteome</keyword>
<keyword id="KW-0687">Ribonucleoprotein</keyword>
<keyword id="KW-0689">Ribosomal protein</keyword>
<protein>
    <recommendedName>
        <fullName evidence="1">Large ribosomal subunit protein bL31B</fullName>
    </recommendedName>
    <alternativeName>
        <fullName evidence="2">50S ribosomal protein L31 type B</fullName>
    </alternativeName>
</protein>
<dbReference type="EMBL" id="CP000569">
    <property type="protein sequence ID" value="ABN74903.1"/>
    <property type="molecule type" value="Genomic_DNA"/>
</dbReference>
<dbReference type="RefSeq" id="WP_005599422.1">
    <property type="nucleotide sequence ID" value="NC_009053.1"/>
</dbReference>
<dbReference type="SMR" id="A3N3B7"/>
<dbReference type="STRING" id="416269.APL_1821"/>
<dbReference type="EnsemblBacteria" id="ABN74903">
    <property type="protein sequence ID" value="ABN74903"/>
    <property type="gene ID" value="APL_1821"/>
</dbReference>
<dbReference type="KEGG" id="apl:APL_1821"/>
<dbReference type="eggNOG" id="COG0254">
    <property type="taxonomic scope" value="Bacteria"/>
</dbReference>
<dbReference type="HOGENOM" id="CLU_114306_2_1_6"/>
<dbReference type="Proteomes" id="UP000001432">
    <property type="component" value="Chromosome"/>
</dbReference>
<dbReference type="GO" id="GO:1990904">
    <property type="term" value="C:ribonucleoprotein complex"/>
    <property type="evidence" value="ECO:0007669"/>
    <property type="project" value="UniProtKB-KW"/>
</dbReference>
<dbReference type="GO" id="GO:0005840">
    <property type="term" value="C:ribosome"/>
    <property type="evidence" value="ECO:0007669"/>
    <property type="project" value="UniProtKB-KW"/>
</dbReference>
<dbReference type="GO" id="GO:0003735">
    <property type="term" value="F:structural constituent of ribosome"/>
    <property type="evidence" value="ECO:0007669"/>
    <property type="project" value="InterPro"/>
</dbReference>
<dbReference type="GO" id="GO:0006412">
    <property type="term" value="P:translation"/>
    <property type="evidence" value="ECO:0007669"/>
    <property type="project" value="UniProtKB-UniRule"/>
</dbReference>
<dbReference type="Gene3D" id="4.10.830.30">
    <property type="entry name" value="Ribosomal protein L31"/>
    <property type="match status" value="1"/>
</dbReference>
<dbReference type="HAMAP" id="MF_00502">
    <property type="entry name" value="Ribosomal_bL31_2"/>
    <property type="match status" value="1"/>
</dbReference>
<dbReference type="InterPro" id="IPR034704">
    <property type="entry name" value="Ribosomal_bL28/bL31-like_sf"/>
</dbReference>
<dbReference type="InterPro" id="IPR002150">
    <property type="entry name" value="Ribosomal_bL31"/>
</dbReference>
<dbReference type="InterPro" id="IPR027493">
    <property type="entry name" value="Ribosomal_bL31_B"/>
</dbReference>
<dbReference type="InterPro" id="IPR042105">
    <property type="entry name" value="Ribosomal_bL31_sf"/>
</dbReference>
<dbReference type="NCBIfam" id="TIGR00105">
    <property type="entry name" value="L31"/>
    <property type="match status" value="1"/>
</dbReference>
<dbReference type="NCBIfam" id="NF002462">
    <property type="entry name" value="PRK01678.1"/>
    <property type="match status" value="1"/>
</dbReference>
<dbReference type="PANTHER" id="PTHR33280">
    <property type="entry name" value="50S RIBOSOMAL PROTEIN L31, CHLOROPLASTIC"/>
    <property type="match status" value="1"/>
</dbReference>
<dbReference type="PANTHER" id="PTHR33280:SF1">
    <property type="entry name" value="LARGE RIBOSOMAL SUBUNIT PROTEIN BL31C"/>
    <property type="match status" value="1"/>
</dbReference>
<dbReference type="Pfam" id="PF01197">
    <property type="entry name" value="Ribosomal_L31"/>
    <property type="match status" value="1"/>
</dbReference>
<dbReference type="PRINTS" id="PR01249">
    <property type="entry name" value="RIBOSOMALL31"/>
</dbReference>
<dbReference type="SUPFAM" id="SSF143800">
    <property type="entry name" value="L28p-like"/>
    <property type="match status" value="1"/>
</dbReference>
<dbReference type="PROSITE" id="PS01143">
    <property type="entry name" value="RIBOSOMAL_L31"/>
    <property type="match status" value="1"/>
</dbReference>
<evidence type="ECO:0000255" key="1">
    <source>
        <dbReference type="HAMAP-Rule" id="MF_00502"/>
    </source>
</evidence>
<evidence type="ECO:0000305" key="2"/>
<name>RL31B_ACTP2</name>
<proteinExistence type="inferred from homology"/>
<gene>
    <name evidence="1" type="primary">rpmE2</name>
    <name type="ordered locus">APL_1821</name>
</gene>
<sequence>MKKGIHPENYREVLFYDGSVQMGWIIRSCAATTKTMVWEDGKEYPFYPLDTSSASHPVYTGKRREVNTEGRASKFNERFKGMAGLAAKK</sequence>
<feature type="chain" id="PRO_1000014678" description="Large ribosomal subunit protein bL31B">
    <location>
        <begin position="1"/>
        <end position="89"/>
    </location>
</feature>